<organism>
    <name type="scientific">Carboxydothermus hydrogenoformans (strain ATCC BAA-161 / DSM 6008 / Z-2901)</name>
    <dbReference type="NCBI Taxonomy" id="246194"/>
    <lineage>
        <taxon>Bacteria</taxon>
        <taxon>Bacillati</taxon>
        <taxon>Bacillota</taxon>
        <taxon>Clostridia</taxon>
        <taxon>Thermoanaerobacterales</taxon>
        <taxon>Thermoanaerobacteraceae</taxon>
        <taxon>Carboxydothermus</taxon>
    </lineage>
</organism>
<evidence type="ECO:0000255" key="1">
    <source>
        <dbReference type="HAMAP-Rule" id="MF_00165"/>
    </source>
</evidence>
<protein>
    <recommendedName>
        <fullName evidence="1">Thymidylate kinase</fullName>
        <ecNumber evidence="1">2.7.4.9</ecNumber>
    </recommendedName>
    <alternativeName>
        <fullName evidence="1">dTMP kinase</fullName>
    </alternativeName>
</protein>
<sequence>MRGKFITIEGVEGSGKTTQIQYIARYLTEKNIPHIITREPGGTALGKKIRELLLNPSYPVVPEAEILLYLADRAQHVGEKIIPHLDKGVWVISDRYFDSTLAYQGYGRGFDLTLLKSFIAFATKGLIPDLTVLIDLPPEVGLSRVKGRGEYDRLERETLEFHQRVREGFLQLARDQRFRVVDGRKKPEEIFWEIKGFLEGLNG</sequence>
<accession>Q3AG12</accession>
<feature type="chain" id="PRO_1000023172" description="Thymidylate kinase">
    <location>
        <begin position="1"/>
        <end position="203"/>
    </location>
</feature>
<feature type="binding site" evidence="1">
    <location>
        <begin position="10"/>
        <end position="17"/>
    </location>
    <ligand>
        <name>ATP</name>
        <dbReference type="ChEBI" id="CHEBI:30616"/>
    </ligand>
</feature>
<dbReference type="EC" id="2.7.4.9" evidence="1"/>
<dbReference type="EMBL" id="CP000141">
    <property type="protein sequence ID" value="ABB15455.1"/>
    <property type="molecule type" value="Genomic_DNA"/>
</dbReference>
<dbReference type="RefSeq" id="WP_011342998.1">
    <property type="nucleotide sequence ID" value="NC_007503.1"/>
</dbReference>
<dbReference type="SMR" id="Q3AG12"/>
<dbReference type="FunCoup" id="Q3AG12">
    <property type="interactions" value="305"/>
</dbReference>
<dbReference type="STRING" id="246194.CHY_0050"/>
<dbReference type="KEGG" id="chy:CHY_0050"/>
<dbReference type="eggNOG" id="COG0125">
    <property type="taxonomic scope" value="Bacteria"/>
</dbReference>
<dbReference type="HOGENOM" id="CLU_049131_0_2_9"/>
<dbReference type="InParanoid" id="Q3AG12"/>
<dbReference type="OrthoDB" id="9774907at2"/>
<dbReference type="Proteomes" id="UP000002706">
    <property type="component" value="Chromosome"/>
</dbReference>
<dbReference type="GO" id="GO:0005829">
    <property type="term" value="C:cytosol"/>
    <property type="evidence" value="ECO:0007669"/>
    <property type="project" value="TreeGrafter"/>
</dbReference>
<dbReference type="GO" id="GO:0005524">
    <property type="term" value="F:ATP binding"/>
    <property type="evidence" value="ECO:0007669"/>
    <property type="project" value="UniProtKB-UniRule"/>
</dbReference>
<dbReference type="GO" id="GO:0004798">
    <property type="term" value="F:dTMP kinase activity"/>
    <property type="evidence" value="ECO:0007669"/>
    <property type="project" value="UniProtKB-UniRule"/>
</dbReference>
<dbReference type="GO" id="GO:0006233">
    <property type="term" value="P:dTDP biosynthetic process"/>
    <property type="evidence" value="ECO:0007669"/>
    <property type="project" value="InterPro"/>
</dbReference>
<dbReference type="GO" id="GO:0006235">
    <property type="term" value="P:dTTP biosynthetic process"/>
    <property type="evidence" value="ECO:0007669"/>
    <property type="project" value="UniProtKB-UniRule"/>
</dbReference>
<dbReference type="GO" id="GO:0006227">
    <property type="term" value="P:dUDP biosynthetic process"/>
    <property type="evidence" value="ECO:0007669"/>
    <property type="project" value="TreeGrafter"/>
</dbReference>
<dbReference type="CDD" id="cd01672">
    <property type="entry name" value="TMPK"/>
    <property type="match status" value="1"/>
</dbReference>
<dbReference type="FunFam" id="3.40.50.300:FF:000225">
    <property type="entry name" value="Thymidylate kinase"/>
    <property type="match status" value="1"/>
</dbReference>
<dbReference type="Gene3D" id="3.40.50.300">
    <property type="entry name" value="P-loop containing nucleotide triphosphate hydrolases"/>
    <property type="match status" value="1"/>
</dbReference>
<dbReference type="HAMAP" id="MF_00165">
    <property type="entry name" value="Thymidylate_kinase"/>
    <property type="match status" value="1"/>
</dbReference>
<dbReference type="InterPro" id="IPR027417">
    <property type="entry name" value="P-loop_NTPase"/>
</dbReference>
<dbReference type="InterPro" id="IPR039430">
    <property type="entry name" value="Thymidylate_kin-like_dom"/>
</dbReference>
<dbReference type="InterPro" id="IPR018095">
    <property type="entry name" value="Thymidylate_kin_CS"/>
</dbReference>
<dbReference type="InterPro" id="IPR018094">
    <property type="entry name" value="Thymidylate_kinase"/>
</dbReference>
<dbReference type="NCBIfam" id="TIGR00041">
    <property type="entry name" value="DTMP_kinase"/>
    <property type="match status" value="1"/>
</dbReference>
<dbReference type="PANTHER" id="PTHR10344">
    <property type="entry name" value="THYMIDYLATE KINASE"/>
    <property type="match status" value="1"/>
</dbReference>
<dbReference type="PANTHER" id="PTHR10344:SF4">
    <property type="entry name" value="UMP-CMP KINASE 2, MITOCHONDRIAL"/>
    <property type="match status" value="1"/>
</dbReference>
<dbReference type="Pfam" id="PF02223">
    <property type="entry name" value="Thymidylate_kin"/>
    <property type="match status" value="1"/>
</dbReference>
<dbReference type="SUPFAM" id="SSF52540">
    <property type="entry name" value="P-loop containing nucleoside triphosphate hydrolases"/>
    <property type="match status" value="1"/>
</dbReference>
<dbReference type="PROSITE" id="PS01331">
    <property type="entry name" value="THYMIDYLATE_KINASE"/>
    <property type="match status" value="1"/>
</dbReference>
<name>KTHY_CARHZ</name>
<comment type="function">
    <text evidence="1">Phosphorylation of dTMP to form dTDP in both de novo and salvage pathways of dTTP synthesis.</text>
</comment>
<comment type="catalytic activity">
    <reaction evidence="1">
        <text>dTMP + ATP = dTDP + ADP</text>
        <dbReference type="Rhea" id="RHEA:13517"/>
        <dbReference type="ChEBI" id="CHEBI:30616"/>
        <dbReference type="ChEBI" id="CHEBI:58369"/>
        <dbReference type="ChEBI" id="CHEBI:63528"/>
        <dbReference type="ChEBI" id="CHEBI:456216"/>
        <dbReference type="EC" id="2.7.4.9"/>
    </reaction>
</comment>
<comment type="similarity">
    <text evidence="1">Belongs to the thymidylate kinase family.</text>
</comment>
<keyword id="KW-0067">ATP-binding</keyword>
<keyword id="KW-0418">Kinase</keyword>
<keyword id="KW-0545">Nucleotide biosynthesis</keyword>
<keyword id="KW-0547">Nucleotide-binding</keyword>
<keyword id="KW-1185">Reference proteome</keyword>
<keyword id="KW-0808">Transferase</keyword>
<reference key="1">
    <citation type="journal article" date="2005" name="PLoS Genet.">
        <title>Life in hot carbon monoxide: the complete genome sequence of Carboxydothermus hydrogenoformans Z-2901.</title>
        <authorList>
            <person name="Wu M."/>
            <person name="Ren Q."/>
            <person name="Durkin A.S."/>
            <person name="Daugherty S.C."/>
            <person name="Brinkac L.M."/>
            <person name="Dodson R.J."/>
            <person name="Madupu R."/>
            <person name="Sullivan S.A."/>
            <person name="Kolonay J.F."/>
            <person name="Nelson W.C."/>
            <person name="Tallon L.J."/>
            <person name="Jones K.M."/>
            <person name="Ulrich L.E."/>
            <person name="Gonzalez J.M."/>
            <person name="Zhulin I.B."/>
            <person name="Robb F.T."/>
            <person name="Eisen J.A."/>
        </authorList>
    </citation>
    <scope>NUCLEOTIDE SEQUENCE [LARGE SCALE GENOMIC DNA]</scope>
    <source>
        <strain>ATCC BAA-161 / DSM 6008 / Z-2901</strain>
    </source>
</reference>
<gene>
    <name evidence="1" type="primary">tmk</name>
    <name type="ordered locus">CHY_0050</name>
</gene>
<proteinExistence type="inferred from homology"/>